<name>TATB_VIBPA</name>
<dbReference type="EMBL" id="BA000031">
    <property type="protein sequence ID" value="BAC58362.1"/>
    <property type="molecule type" value="Genomic_DNA"/>
</dbReference>
<dbReference type="RefSeq" id="NP_796478.1">
    <property type="nucleotide sequence ID" value="NC_004603.1"/>
</dbReference>
<dbReference type="RefSeq" id="WP_005459768.1">
    <property type="nucleotide sequence ID" value="NC_004603.1"/>
</dbReference>
<dbReference type="SMR" id="Q87TH0"/>
<dbReference type="GeneID" id="1187566"/>
<dbReference type="KEGG" id="vpa:VP0099"/>
<dbReference type="PATRIC" id="fig|223926.6.peg.94"/>
<dbReference type="eggNOG" id="COG1826">
    <property type="taxonomic scope" value="Bacteria"/>
</dbReference>
<dbReference type="HOGENOM" id="CLU_086034_1_0_6"/>
<dbReference type="Proteomes" id="UP000002493">
    <property type="component" value="Chromosome 1"/>
</dbReference>
<dbReference type="GO" id="GO:0033281">
    <property type="term" value="C:TAT protein transport complex"/>
    <property type="evidence" value="ECO:0007669"/>
    <property type="project" value="UniProtKB-UniRule"/>
</dbReference>
<dbReference type="GO" id="GO:0008320">
    <property type="term" value="F:protein transmembrane transporter activity"/>
    <property type="evidence" value="ECO:0007669"/>
    <property type="project" value="UniProtKB-UniRule"/>
</dbReference>
<dbReference type="GO" id="GO:0043953">
    <property type="term" value="P:protein transport by the Tat complex"/>
    <property type="evidence" value="ECO:0007669"/>
    <property type="project" value="UniProtKB-UniRule"/>
</dbReference>
<dbReference type="Gene3D" id="1.20.5.3310">
    <property type="match status" value="1"/>
</dbReference>
<dbReference type="HAMAP" id="MF_00237">
    <property type="entry name" value="TatB"/>
    <property type="match status" value="1"/>
</dbReference>
<dbReference type="InterPro" id="IPR003369">
    <property type="entry name" value="TatA/B/E"/>
</dbReference>
<dbReference type="InterPro" id="IPR018448">
    <property type="entry name" value="TatB"/>
</dbReference>
<dbReference type="NCBIfam" id="TIGR01410">
    <property type="entry name" value="tatB"/>
    <property type="match status" value="1"/>
</dbReference>
<dbReference type="PANTHER" id="PTHR33162">
    <property type="entry name" value="SEC-INDEPENDENT PROTEIN TRANSLOCASE PROTEIN TATA, CHLOROPLASTIC"/>
    <property type="match status" value="1"/>
</dbReference>
<dbReference type="PANTHER" id="PTHR33162:SF1">
    <property type="entry name" value="SEC-INDEPENDENT PROTEIN TRANSLOCASE PROTEIN TATA, CHLOROPLASTIC"/>
    <property type="match status" value="1"/>
</dbReference>
<dbReference type="Pfam" id="PF02416">
    <property type="entry name" value="TatA_B_E"/>
    <property type="match status" value="1"/>
</dbReference>
<dbReference type="PRINTS" id="PR01506">
    <property type="entry name" value="TATBPROTEIN"/>
</dbReference>
<comment type="function">
    <text evidence="1">Part of the twin-arginine translocation (Tat) system that transports large folded proteins containing a characteristic twin-arginine motif in their signal peptide across membranes. Together with TatC, TatB is part of a receptor directly interacting with Tat signal peptides. TatB may form an oligomeric binding site that transiently accommodates folded Tat precursor proteins before their translocation.</text>
</comment>
<comment type="subunit">
    <text evidence="1">The Tat system comprises two distinct complexes: a TatABC complex, containing multiple copies of TatA, TatB and TatC subunits, and a separate TatA complex, containing only TatA subunits. Substrates initially bind to the TatABC complex, which probably triggers association of the separate TatA complex to form the active translocon.</text>
</comment>
<comment type="subcellular location">
    <subcellularLocation>
        <location evidence="1">Cell inner membrane</location>
        <topology evidence="1">Single-pass membrane protein</topology>
    </subcellularLocation>
</comment>
<comment type="similarity">
    <text evidence="1">Belongs to the TatB family.</text>
</comment>
<feature type="chain" id="PRO_0000192674" description="Sec-independent protein translocase protein TatB">
    <location>
        <begin position="1"/>
        <end position="132"/>
    </location>
</feature>
<feature type="transmembrane region" description="Helical" evidence="1">
    <location>
        <begin position="1"/>
        <end position="21"/>
    </location>
</feature>
<feature type="region of interest" description="Disordered" evidence="2">
    <location>
        <begin position="70"/>
        <end position="132"/>
    </location>
</feature>
<feature type="compositionally biased region" description="Basic and acidic residues" evidence="2">
    <location>
        <begin position="96"/>
        <end position="108"/>
    </location>
</feature>
<feature type="compositionally biased region" description="Basic and acidic residues" evidence="2">
    <location>
        <begin position="115"/>
        <end position="132"/>
    </location>
</feature>
<proteinExistence type="inferred from homology"/>
<accession>Q87TH0</accession>
<reference key="1">
    <citation type="journal article" date="2003" name="Lancet">
        <title>Genome sequence of Vibrio parahaemolyticus: a pathogenic mechanism distinct from that of V. cholerae.</title>
        <authorList>
            <person name="Makino K."/>
            <person name="Oshima K."/>
            <person name="Kurokawa K."/>
            <person name="Yokoyama K."/>
            <person name="Uda T."/>
            <person name="Tagomori K."/>
            <person name="Iijima Y."/>
            <person name="Najima M."/>
            <person name="Nakano M."/>
            <person name="Yamashita A."/>
            <person name="Kubota Y."/>
            <person name="Kimura S."/>
            <person name="Yasunaga T."/>
            <person name="Honda T."/>
            <person name="Shinagawa H."/>
            <person name="Hattori M."/>
            <person name="Iida T."/>
        </authorList>
    </citation>
    <scope>NUCLEOTIDE SEQUENCE [LARGE SCALE GENOMIC DNA]</scope>
    <source>
        <strain>RIMD 2210633</strain>
    </source>
</reference>
<protein>
    <recommendedName>
        <fullName evidence="1">Sec-independent protein translocase protein TatB</fullName>
    </recommendedName>
</protein>
<sequence length="132" mass="14579">MFDIGFWELVLISVVGLVVLGPERLPHAIRSVSRFIGAAKNMANSVKDELSHELKVQELQENLRKAEQMGMEDLSPELKSSVEELKKAAQSVNRPYADKAQSETETAKAEPVTESAEKVEEIKVSAADKKAE</sequence>
<organism>
    <name type="scientific">Vibrio parahaemolyticus serotype O3:K6 (strain RIMD 2210633)</name>
    <dbReference type="NCBI Taxonomy" id="223926"/>
    <lineage>
        <taxon>Bacteria</taxon>
        <taxon>Pseudomonadati</taxon>
        <taxon>Pseudomonadota</taxon>
        <taxon>Gammaproteobacteria</taxon>
        <taxon>Vibrionales</taxon>
        <taxon>Vibrionaceae</taxon>
        <taxon>Vibrio</taxon>
    </lineage>
</organism>
<evidence type="ECO:0000255" key="1">
    <source>
        <dbReference type="HAMAP-Rule" id="MF_00237"/>
    </source>
</evidence>
<evidence type="ECO:0000256" key="2">
    <source>
        <dbReference type="SAM" id="MobiDB-lite"/>
    </source>
</evidence>
<keyword id="KW-0997">Cell inner membrane</keyword>
<keyword id="KW-1003">Cell membrane</keyword>
<keyword id="KW-0472">Membrane</keyword>
<keyword id="KW-0653">Protein transport</keyword>
<keyword id="KW-0811">Translocation</keyword>
<keyword id="KW-0812">Transmembrane</keyword>
<keyword id="KW-1133">Transmembrane helix</keyword>
<keyword id="KW-0813">Transport</keyword>
<gene>
    <name evidence="1" type="primary">tatB</name>
    <name type="ordered locus">VP0099</name>
</gene>